<keyword id="KW-0067">ATP-binding</keyword>
<keyword id="KW-0460">Magnesium</keyword>
<keyword id="KW-0547">Nucleotide-binding</keyword>
<keyword id="KW-1185">Reference proteome</keyword>
<keyword id="KW-0808">Transferase</keyword>
<keyword id="KW-0819">tRNA processing</keyword>
<dbReference type="EC" id="2.5.1.75" evidence="1"/>
<dbReference type="EMBL" id="AE017340">
    <property type="protein sequence ID" value="AAV81175.1"/>
    <property type="molecule type" value="Genomic_DNA"/>
</dbReference>
<dbReference type="RefSeq" id="WP_011233594.1">
    <property type="nucleotide sequence ID" value="NC_006512.1"/>
</dbReference>
<dbReference type="SMR" id="Q5QWA0"/>
<dbReference type="STRING" id="283942.IL0332"/>
<dbReference type="GeneID" id="41335479"/>
<dbReference type="KEGG" id="ilo:IL0332"/>
<dbReference type="eggNOG" id="COG0324">
    <property type="taxonomic scope" value="Bacteria"/>
</dbReference>
<dbReference type="HOGENOM" id="CLU_032616_0_0_6"/>
<dbReference type="OrthoDB" id="9776390at2"/>
<dbReference type="Proteomes" id="UP000001171">
    <property type="component" value="Chromosome"/>
</dbReference>
<dbReference type="GO" id="GO:0005524">
    <property type="term" value="F:ATP binding"/>
    <property type="evidence" value="ECO:0007669"/>
    <property type="project" value="UniProtKB-UniRule"/>
</dbReference>
<dbReference type="GO" id="GO:0052381">
    <property type="term" value="F:tRNA dimethylallyltransferase activity"/>
    <property type="evidence" value="ECO:0007669"/>
    <property type="project" value="UniProtKB-UniRule"/>
</dbReference>
<dbReference type="GO" id="GO:0006400">
    <property type="term" value="P:tRNA modification"/>
    <property type="evidence" value="ECO:0007669"/>
    <property type="project" value="TreeGrafter"/>
</dbReference>
<dbReference type="FunFam" id="1.10.20.140:FF:000001">
    <property type="entry name" value="tRNA dimethylallyltransferase"/>
    <property type="match status" value="1"/>
</dbReference>
<dbReference type="Gene3D" id="1.10.20.140">
    <property type="match status" value="1"/>
</dbReference>
<dbReference type="Gene3D" id="3.40.50.300">
    <property type="entry name" value="P-loop containing nucleotide triphosphate hydrolases"/>
    <property type="match status" value="1"/>
</dbReference>
<dbReference type="HAMAP" id="MF_00185">
    <property type="entry name" value="IPP_trans"/>
    <property type="match status" value="1"/>
</dbReference>
<dbReference type="InterPro" id="IPR039657">
    <property type="entry name" value="Dimethylallyltransferase"/>
</dbReference>
<dbReference type="InterPro" id="IPR018022">
    <property type="entry name" value="IPT"/>
</dbReference>
<dbReference type="InterPro" id="IPR027417">
    <property type="entry name" value="P-loop_NTPase"/>
</dbReference>
<dbReference type="NCBIfam" id="TIGR00174">
    <property type="entry name" value="miaA"/>
    <property type="match status" value="1"/>
</dbReference>
<dbReference type="PANTHER" id="PTHR11088">
    <property type="entry name" value="TRNA DIMETHYLALLYLTRANSFERASE"/>
    <property type="match status" value="1"/>
</dbReference>
<dbReference type="PANTHER" id="PTHR11088:SF60">
    <property type="entry name" value="TRNA DIMETHYLALLYLTRANSFERASE"/>
    <property type="match status" value="1"/>
</dbReference>
<dbReference type="Pfam" id="PF01715">
    <property type="entry name" value="IPPT"/>
    <property type="match status" value="1"/>
</dbReference>
<dbReference type="SUPFAM" id="SSF52540">
    <property type="entry name" value="P-loop containing nucleoside triphosphate hydrolases"/>
    <property type="match status" value="1"/>
</dbReference>
<reference key="1">
    <citation type="journal article" date="2004" name="Proc. Natl. Acad. Sci. U.S.A.">
        <title>Genome sequence of the deep-sea gamma-proteobacterium Idiomarina loihiensis reveals amino acid fermentation as a source of carbon and energy.</title>
        <authorList>
            <person name="Hou S."/>
            <person name="Saw J.H."/>
            <person name="Lee K.S."/>
            <person name="Freitas T.A."/>
            <person name="Belisle C."/>
            <person name="Kawarabayasi Y."/>
            <person name="Donachie S.P."/>
            <person name="Pikina A."/>
            <person name="Galperin M.Y."/>
            <person name="Koonin E.V."/>
            <person name="Makarova K.S."/>
            <person name="Omelchenko M.V."/>
            <person name="Sorokin A."/>
            <person name="Wolf Y.I."/>
            <person name="Li Q.X."/>
            <person name="Keum Y.S."/>
            <person name="Campbell S."/>
            <person name="Denery J."/>
            <person name="Aizawa S."/>
            <person name="Shibata S."/>
            <person name="Malahoff A."/>
            <person name="Alam M."/>
        </authorList>
    </citation>
    <scope>NUCLEOTIDE SEQUENCE [LARGE SCALE GENOMIC DNA]</scope>
    <source>
        <strain>ATCC BAA-735 / DSM 15497 / L2-TR</strain>
    </source>
</reference>
<feature type="chain" id="PRO_0000163927" description="tRNA dimethylallyltransferase">
    <location>
        <begin position="1"/>
        <end position="316"/>
    </location>
</feature>
<feature type="region of interest" description="Interaction with substrate tRNA" evidence="1">
    <location>
        <begin position="37"/>
        <end position="40"/>
    </location>
</feature>
<feature type="region of interest" description="Interaction with substrate tRNA" evidence="1">
    <location>
        <begin position="161"/>
        <end position="165"/>
    </location>
</feature>
<feature type="binding site" evidence="1">
    <location>
        <begin position="12"/>
        <end position="19"/>
    </location>
    <ligand>
        <name>ATP</name>
        <dbReference type="ChEBI" id="CHEBI:30616"/>
    </ligand>
</feature>
<feature type="binding site" evidence="1">
    <location>
        <begin position="14"/>
        <end position="19"/>
    </location>
    <ligand>
        <name>substrate</name>
    </ligand>
</feature>
<feature type="site" description="Interaction with substrate tRNA" evidence="1">
    <location>
        <position position="103"/>
    </location>
</feature>
<feature type="site" description="Interaction with substrate tRNA" evidence="1">
    <location>
        <position position="125"/>
    </location>
</feature>
<sequence>MHSKDAVIAIYGPTASGKTALSLALCEQLDCEIISVDSALIYRGMDIGTAKPSAEEQNLVPHHLLDIRDPAETYSAADFQKDALALIDDIQQRGKVPLLVGGTMLYFKALLEGLSHLPESDTSVREKLTAELHEKGLAELHSRLQKVDPTSAKRIHPNDPQRILRALEVYEIAGKPLTELTRERHGQLTKPIYQFAVAPVERKVLHQRIEQRFDHMLAQPFKEEVATLFARPDLHPDLPSIRSVGYRQMWQHLAGELSYDEMRERGIIATRQLAKRQMTWLRGWPGVHWLETGDLNMQAKVMTAMQQPAKIFNSKD</sequence>
<evidence type="ECO:0000255" key="1">
    <source>
        <dbReference type="HAMAP-Rule" id="MF_00185"/>
    </source>
</evidence>
<comment type="function">
    <text evidence="1">Catalyzes the transfer of a dimethylallyl group onto the adenine at position 37 in tRNAs that read codons beginning with uridine, leading to the formation of N6-(dimethylallyl)adenosine (i(6)A).</text>
</comment>
<comment type="catalytic activity">
    <reaction evidence="1">
        <text>adenosine(37) in tRNA + dimethylallyl diphosphate = N(6)-dimethylallyladenosine(37) in tRNA + diphosphate</text>
        <dbReference type="Rhea" id="RHEA:26482"/>
        <dbReference type="Rhea" id="RHEA-COMP:10162"/>
        <dbReference type="Rhea" id="RHEA-COMP:10375"/>
        <dbReference type="ChEBI" id="CHEBI:33019"/>
        <dbReference type="ChEBI" id="CHEBI:57623"/>
        <dbReference type="ChEBI" id="CHEBI:74411"/>
        <dbReference type="ChEBI" id="CHEBI:74415"/>
        <dbReference type="EC" id="2.5.1.75"/>
    </reaction>
</comment>
<comment type="cofactor">
    <cofactor evidence="1">
        <name>Mg(2+)</name>
        <dbReference type="ChEBI" id="CHEBI:18420"/>
    </cofactor>
</comment>
<comment type="subunit">
    <text evidence="1">Monomer.</text>
</comment>
<comment type="similarity">
    <text evidence="1">Belongs to the IPP transferase family.</text>
</comment>
<organism>
    <name type="scientific">Idiomarina loihiensis (strain ATCC BAA-735 / DSM 15497 / L2-TR)</name>
    <dbReference type="NCBI Taxonomy" id="283942"/>
    <lineage>
        <taxon>Bacteria</taxon>
        <taxon>Pseudomonadati</taxon>
        <taxon>Pseudomonadota</taxon>
        <taxon>Gammaproteobacteria</taxon>
        <taxon>Alteromonadales</taxon>
        <taxon>Idiomarinaceae</taxon>
        <taxon>Idiomarina</taxon>
    </lineage>
</organism>
<gene>
    <name evidence="1" type="primary">miaA</name>
    <name type="ordered locus">IL0332</name>
</gene>
<proteinExistence type="inferred from homology"/>
<protein>
    <recommendedName>
        <fullName evidence="1">tRNA dimethylallyltransferase</fullName>
        <ecNumber evidence="1">2.5.1.75</ecNumber>
    </recommendedName>
    <alternativeName>
        <fullName evidence="1">Dimethylallyl diphosphate:tRNA dimethylallyltransferase</fullName>
        <shortName evidence="1">DMAPP:tRNA dimethylallyltransferase</shortName>
        <shortName evidence="1">DMATase</shortName>
    </alternativeName>
    <alternativeName>
        <fullName evidence="1">Isopentenyl-diphosphate:tRNA isopentenyltransferase</fullName>
        <shortName evidence="1">IPP transferase</shortName>
        <shortName evidence="1">IPPT</shortName>
        <shortName evidence="1">IPTase</shortName>
    </alternativeName>
</protein>
<accession>Q5QWA0</accession>
<name>MIAA_IDILO</name>